<gene>
    <name evidence="1" type="primary">rpsD</name>
    <name type="ordered locus">ECS88_3684</name>
</gene>
<reference key="1">
    <citation type="journal article" date="2009" name="PLoS Genet.">
        <title>Organised genome dynamics in the Escherichia coli species results in highly diverse adaptive paths.</title>
        <authorList>
            <person name="Touchon M."/>
            <person name="Hoede C."/>
            <person name="Tenaillon O."/>
            <person name="Barbe V."/>
            <person name="Baeriswyl S."/>
            <person name="Bidet P."/>
            <person name="Bingen E."/>
            <person name="Bonacorsi S."/>
            <person name="Bouchier C."/>
            <person name="Bouvet O."/>
            <person name="Calteau A."/>
            <person name="Chiapello H."/>
            <person name="Clermont O."/>
            <person name="Cruveiller S."/>
            <person name="Danchin A."/>
            <person name="Diard M."/>
            <person name="Dossat C."/>
            <person name="Karoui M.E."/>
            <person name="Frapy E."/>
            <person name="Garry L."/>
            <person name="Ghigo J.M."/>
            <person name="Gilles A.M."/>
            <person name="Johnson J."/>
            <person name="Le Bouguenec C."/>
            <person name="Lescat M."/>
            <person name="Mangenot S."/>
            <person name="Martinez-Jehanne V."/>
            <person name="Matic I."/>
            <person name="Nassif X."/>
            <person name="Oztas S."/>
            <person name="Petit M.A."/>
            <person name="Pichon C."/>
            <person name="Rouy Z."/>
            <person name="Ruf C.S."/>
            <person name="Schneider D."/>
            <person name="Tourret J."/>
            <person name="Vacherie B."/>
            <person name="Vallenet D."/>
            <person name="Medigue C."/>
            <person name="Rocha E.P.C."/>
            <person name="Denamur E."/>
        </authorList>
    </citation>
    <scope>NUCLEOTIDE SEQUENCE [LARGE SCALE GENOMIC DNA]</scope>
    <source>
        <strain>S88 / ExPEC</strain>
    </source>
</reference>
<name>RS4_ECO45</name>
<feature type="chain" id="PRO_1000140724" description="Small ribosomal subunit protein uS4">
    <location>
        <begin position="1"/>
        <end position="206"/>
    </location>
</feature>
<feature type="domain" description="S4 RNA-binding" evidence="1">
    <location>
        <begin position="96"/>
        <end position="156"/>
    </location>
</feature>
<organism>
    <name type="scientific">Escherichia coli O45:K1 (strain S88 / ExPEC)</name>
    <dbReference type="NCBI Taxonomy" id="585035"/>
    <lineage>
        <taxon>Bacteria</taxon>
        <taxon>Pseudomonadati</taxon>
        <taxon>Pseudomonadota</taxon>
        <taxon>Gammaproteobacteria</taxon>
        <taxon>Enterobacterales</taxon>
        <taxon>Enterobacteriaceae</taxon>
        <taxon>Escherichia</taxon>
    </lineage>
</organism>
<sequence length="206" mass="23469">MARYLGPKLKLSRREGTDLFLKSGVRAIDTKCKIEQAPGQHGARKPRLSDYGVQLREKQKVRRIYGVLERQFRNYYKEAARLKGNTGENLLALLEGRLDNVVYRMGFGATRAEARQLVSHKAIMVNGRVVNIASYQVSPNDVVSIREKAKKQSRVKAALELAEQREKPTWLEVDAGKMEGTFKRKPERSDLSADINEHLIVELYSK</sequence>
<comment type="function">
    <text evidence="1">One of the primary rRNA binding proteins, it binds directly to 16S rRNA where it nucleates assembly of the body of the 30S subunit.</text>
</comment>
<comment type="function">
    <text evidence="1">With S5 and S12 plays an important role in translational accuracy.</text>
</comment>
<comment type="subunit">
    <text evidence="1">Part of the 30S ribosomal subunit. Contacts protein S5. The interaction surface between S4 and S5 is involved in control of translational fidelity.</text>
</comment>
<comment type="similarity">
    <text evidence="1">Belongs to the universal ribosomal protein uS4 family.</text>
</comment>
<evidence type="ECO:0000255" key="1">
    <source>
        <dbReference type="HAMAP-Rule" id="MF_01306"/>
    </source>
</evidence>
<evidence type="ECO:0000305" key="2"/>
<accession>B7MCR2</accession>
<protein>
    <recommendedName>
        <fullName evidence="1">Small ribosomal subunit protein uS4</fullName>
    </recommendedName>
    <alternativeName>
        <fullName evidence="2">30S ribosomal protein S4</fullName>
    </alternativeName>
</protein>
<keyword id="KW-1185">Reference proteome</keyword>
<keyword id="KW-0687">Ribonucleoprotein</keyword>
<keyword id="KW-0689">Ribosomal protein</keyword>
<keyword id="KW-0694">RNA-binding</keyword>
<keyword id="KW-0699">rRNA-binding</keyword>
<proteinExistence type="inferred from homology"/>
<dbReference type="EMBL" id="CU928161">
    <property type="protein sequence ID" value="CAR04901.1"/>
    <property type="molecule type" value="Genomic_DNA"/>
</dbReference>
<dbReference type="RefSeq" id="WP_000135224.1">
    <property type="nucleotide sequence ID" value="NC_011742.1"/>
</dbReference>
<dbReference type="EMDB" id="EMD-7014"/>
<dbReference type="EMDB" id="EMD-7015"/>
<dbReference type="EMDB" id="EMD-7016"/>
<dbReference type="EMDB" id="EMD-7970"/>
<dbReference type="EMDB" id="EMD-8621"/>
<dbReference type="EMDB" id="EMD-8826"/>
<dbReference type="EMDB" id="EMD-8829"/>
<dbReference type="SMR" id="B7MCR2"/>
<dbReference type="IntAct" id="B7MCR2">
    <property type="interactions" value="1"/>
</dbReference>
<dbReference type="GeneID" id="93778691"/>
<dbReference type="KEGG" id="ecz:ECS88_3684"/>
<dbReference type="HOGENOM" id="CLU_092403_0_2_6"/>
<dbReference type="Proteomes" id="UP000000747">
    <property type="component" value="Chromosome"/>
</dbReference>
<dbReference type="GO" id="GO:0015935">
    <property type="term" value="C:small ribosomal subunit"/>
    <property type="evidence" value="ECO:0007669"/>
    <property type="project" value="InterPro"/>
</dbReference>
<dbReference type="GO" id="GO:0019843">
    <property type="term" value="F:rRNA binding"/>
    <property type="evidence" value="ECO:0007669"/>
    <property type="project" value="UniProtKB-UniRule"/>
</dbReference>
<dbReference type="GO" id="GO:0003735">
    <property type="term" value="F:structural constituent of ribosome"/>
    <property type="evidence" value="ECO:0007669"/>
    <property type="project" value="InterPro"/>
</dbReference>
<dbReference type="GO" id="GO:0042274">
    <property type="term" value="P:ribosomal small subunit biogenesis"/>
    <property type="evidence" value="ECO:0007669"/>
    <property type="project" value="TreeGrafter"/>
</dbReference>
<dbReference type="GO" id="GO:0006412">
    <property type="term" value="P:translation"/>
    <property type="evidence" value="ECO:0007669"/>
    <property type="project" value="UniProtKB-UniRule"/>
</dbReference>
<dbReference type="CDD" id="cd00165">
    <property type="entry name" value="S4"/>
    <property type="match status" value="1"/>
</dbReference>
<dbReference type="FunFam" id="1.10.1050.10:FF:000001">
    <property type="entry name" value="30S ribosomal protein S4"/>
    <property type="match status" value="1"/>
</dbReference>
<dbReference type="FunFam" id="3.10.290.10:FF:000001">
    <property type="entry name" value="30S ribosomal protein S4"/>
    <property type="match status" value="1"/>
</dbReference>
<dbReference type="Gene3D" id="1.10.1050.10">
    <property type="entry name" value="Ribosomal Protein S4 Delta 41, Chain A, domain 1"/>
    <property type="match status" value="1"/>
</dbReference>
<dbReference type="Gene3D" id="3.10.290.10">
    <property type="entry name" value="RNA-binding S4 domain"/>
    <property type="match status" value="1"/>
</dbReference>
<dbReference type="HAMAP" id="MF_01306_B">
    <property type="entry name" value="Ribosomal_uS4_B"/>
    <property type="match status" value="1"/>
</dbReference>
<dbReference type="InterPro" id="IPR022801">
    <property type="entry name" value="Ribosomal_uS4"/>
</dbReference>
<dbReference type="InterPro" id="IPR005709">
    <property type="entry name" value="Ribosomal_uS4_bac-type"/>
</dbReference>
<dbReference type="InterPro" id="IPR018079">
    <property type="entry name" value="Ribosomal_uS4_CS"/>
</dbReference>
<dbReference type="InterPro" id="IPR001912">
    <property type="entry name" value="Ribosomal_uS4_N"/>
</dbReference>
<dbReference type="InterPro" id="IPR002942">
    <property type="entry name" value="S4_RNA-bd"/>
</dbReference>
<dbReference type="InterPro" id="IPR036986">
    <property type="entry name" value="S4_RNA-bd_sf"/>
</dbReference>
<dbReference type="NCBIfam" id="NF003717">
    <property type="entry name" value="PRK05327.1"/>
    <property type="match status" value="1"/>
</dbReference>
<dbReference type="NCBIfam" id="TIGR01017">
    <property type="entry name" value="rpsD_bact"/>
    <property type="match status" value="1"/>
</dbReference>
<dbReference type="PANTHER" id="PTHR11831">
    <property type="entry name" value="30S 40S RIBOSOMAL PROTEIN"/>
    <property type="match status" value="1"/>
</dbReference>
<dbReference type="PANTHER" id="PTHR11831:SF4">
    <property type="entry name" value="SMALL RIBOSOMAL SUBUNIT PROTEIN US4M"/>
    <property type="match status" value="1"/>
</dbReference>
<dbReference type="Pfam" id="PF00163">
    <property type="entry name" value="Ribosomal_S4"/>
    <property type="match status" value="1"/>
</dbReference>
<dbReference type="Pfam" id="PF01479">
    <property type="entry name" value="S4"/>
    <property type="match status" value="1"/>
</dbReference>
<dbReference type="SMART" id="SM01390">
    <property type="entry name" value="Ribosomal_S4"/>
    <property type="match status" value="1"/>
</dbReference>
<dbReference type="SMART" id="SM00363">
    <property type="entry name" value="S4"/>
    <property type="match status" value="1"/>
</dbReference>
<dbReference type="SUPFAM" id="SSF55174">
    <property type="entry name" value="Alpha-L RNA-binding motif"/>
    <property type="match status" value="1"/>
</dbReference>
<dbReference type="PROSITE" id="PS00632">
    <property type="entry name" value="RIBOSOMAL_S4"/>
    <property type="match status" value="1"/>
</dbReference>
<dbReference type="PROSITE" id="PS50889">
    <property type="entry name" value="S4"/>
    <property type="match status" value="1"/>
</dbReference>